<sequence>MMAQQEKVVYPRYAVIRLRGIPTTPRDIAVTLDLLRLRRKFTMVVVKGSPSVMGMIQKVNDWVTWGEIDADTLAEVLRKRGRIVGDKPLTLEYLQKWGWHSFEEIALAYVAGEIDSLSCGKKMRIKEGERPPCIPYLKPFFRLHPPRGGLNSVKLHFSVGGDLGYRGPLINDLIRRML</sequence>
<feature type="chain" id="PRO_0000273913" description="Large ribosomal subunit protein uL30">
    <location>
        <begin position="1"/>
        <end position="178"/>
    </location>
</feature>
<reference key="1">
    <citation type="journal article" date="2002" name="Proc. Natl. Acad. Sci. U.S.A.">
        <title>Genome sequence of the hyperthermophilic crenarchaeon Pyrobaculum aerophilum.</title>
        <authorList>
            <person name="Fitz-Gibbon S.T."/>
            <person name="Ladner H."/>
            <person name="Kim U.-J."/>
            <person name="Stetter K.O."/>
            <person name="Simon M.I."/>
            <person name="Miller J.H."/>
        </authorList>
    </citation>
    <scope>NUCLEOTIDE SEQUENCE [LARGE SCALE GENOMIC DNA]</scope>
    <source>
        <strain>ATCC 51768 / DSM 7523 / JCM 9630 / CIP 104966 / NBRC 100827 / IM2</strain>
    </source>
</reference>
<organism>
    <name type="scientific">Pyrobaculum aerophilum (strain ATCC 51768 / DSM 7523 / JCM 9630 / CIP 104966 / NBRC 100827 / IM2)</name>
    <dbReference type="NCBI Taxonomy" id="178306"/>
    <lineage>
        <taxon>Archaea</taxon>
        <taxon>Thermoproteota</taxon>
        <taxon>Thermoprotei</taxon>
        <taxon>Thermoproteales</taxon>
        <taxon>Thermoproteaceae</taxon>
        <taxon>Pyrobaculum</taxon>
    </lineage>
</organism>
<name>RL30_PYRAE</name>
<keyword id="KW-1185">Reference proteome</keyword>
<keyword id="KW-0687">Ribonucleoprotein</keyword>
<keyword id="KW-0689">Ribosomal protein</keyword>
<protein>
    <recommendedName>
        <fullName evidence="1">Large ribosomal subunit protein uL30</fullName>
    </recommendedName>
    <alternativeName>
        <fullName evidence="2">50S ribosomal protein L30</fullName>
    </alternativeName>
</protein>
<comment type="subunit">
    <text evidence="1">Part of the 50S ribosomal subunit.</text>
</comment>
<comment type="similarity">
    <text evidence="1">Belongs to the universal ribosomal protein uL30 family.</text>
</comment>
<evidence type="ECO:0000255" key="1">
    <source>
        <dbReference type="HAMAP-Rule" id="MF_01371"/>
    </source>
</evidence>
<evidence type="ECO:0000305" key="2"/>
<accession>Q8ZXN8</accession>
<gene>
    <name evidence="1" type="primary">rpl30</name>
    <name type="ordered locus">PAE1183</name>
</gene>
<proteinExistence type="inferred from homology"/>
<dbReference type="EMBL" id="AE009441">
    <property type="protein sequence ID" value="AAL63308.1"/>
    <property type="molecule type" value="Genomic_DNA"/>
</dbReference>
<dbReference type="RefSeq" id="WP_011007780.1">
    <property type="nucleotide sequence ID" value="NC_003364.1"/>
</dbReference>
<dbReference type="SMR" id="Q8ZXN8"/>
<dbReference type="FunCoup" id="Q8ZXN8">
    <property type="interactions" value="178"/>
</dbReference>
<dbReference type="STRING" id="178306.PAE1183"/>
<dbReference type="EnsemblBacteria" id="AAL63308">
    <property type="protein sequence ID" value="AAL63308"/>
    <property type="gene ID" value="PAE1183"/>
</dbReference>
<dbReference type="GeneID" id="1465546"/>
<dbReference type="KEGG" id="pai:PAE1183"/>
<dbReference type="PATRIC" id="fig|178306.9.peg.874"/>
<dbReference type="eggNOG" id="arCOG04086">
    <property type="taxonomic scope" value="Archaea"/>
</dbReference>
<dbReference type="HOGENOM" id="CLU_055156_6_0_2"/>
<dbReference type="InParanoid" id="Q8ZXN8"/>
<dbReference type="Proteomes" id="UP000002439">
    <property type="component" value="Chromosome"/>
</dbReference>
<dbReference type="GO" id="GO:0022625">
    <property type="term" value="C:cytosolic large ribosomal subunit"/>
    <property type="evidence" value="ECO:0000318"/>
    <property type="project" value="GO_Central"/>
</dbReference>
<dbReference type="GO" id="GO:0003723">
    <property type="term" value="F:RNA binding"/>
    <property type="evidence" value="ECO:0000318"/>
    <property type="project" value="GO_Central"/>
</dbReference>
<dbReference type="GO" id="GO:0003735">
    <property type="term" value="F:structural constituent of ribosome"/>
    <property type="evidence" value="ECO:0000318"/>
    <property type="project" value="GO_Central"/>
</dbReference>
<dbReference type="GO" id="GO:0000463">
    <property type="term" value="P:maturation of LSU-rRNA from tricistronic rRNA transcript (SSU-rRNA, 5.8S rRNA, LSU-rRNA)"/>
    <property type="evidence" value="ECO:0000318"/>
    <property type="project" value="GO_Central"/>
</dbReference>
<dbReference type="GO" id="GO:0006412">
    <property type="term" value="P:translation"/>
    <property type="evidence" value="ECO:0007669"/>
    <property type="project" value="UniProtKB-UniRule"/>
</dbReference>
<dbReference type="CDD" id="cd01657">
    <property type="entry name" value="Ribosomal_L7_archeal_euk"/>
    <property type="match status" value="1"/>
</dbReference>
<dbReference type="FunFam" id="1.10.15.30:FF:000002">
    <property type="entry name" value="50S ribosomal protein L30"/>
    <property type="match status" value="1"/>
</dbReference>
<dbReference type="Gene3D" id="1.10.15.30">
    <property type="match status" value="1"/>
</dbReference>
<dbReference type="Gene3D" id="3.30.1390.20">
    <property type="entry name" value="Ribosomal protein L30, ferredoxin-like fold domain"/>
    <property type="match status" value="1"/>
</dbReference>
<dbReference type="HAMAP" id="MF_01371_A">
    <property type="entry name" value="Ribosomal_uL30_A"/>
    <property type="match status" value="1"/>
</dbReference>
<dbReference type="InterPro" id="IPR036919">
    <property type="entry name" value="Ribo_uL30_ferredoxin-like_sf"/>
</dbReference>
<dbReference type="InterPro" id="IPR039699">
    <property type="entry name" value="Ribosomal_uL30"/>
</dbReference>
<dbReference type="InterPro" id="IPR005997">
    <property type="entry name" value="Ribosomal_uL30_arc"/>
</dbReference>
<dbReference type="InterPro" id="IPR035808">
    <property type="entry name" value="Ribosomal_uL30_euk_arc"/>
</dbReference>
<dbReference type="InterPro" id="IPR016082">
    <property type="entry name" value="Ribosomal_uL30_ferredoxin-like"/>
</dbReference>
<dbReference type="NCBIfam" id="NF004711">
    <property type="entry name" value="PRK06049.1"/>
    <property type="match status" value="1"/>
</dbReference>
<dbReference type="NCBIfam" id="TIGR01309">
    <property type="entry name" value="uL30_arch"/>
    <property type="match status" value="1"/>
</dbReference>
<dbReference type="PANTHER" id="PTHR11524">
    <property type="entry name" value="60S RIBOSOMAL PROTEIN L7"/>
    <property type="match status" value="1"/>
</dbReference>
<dbReference type="PANTHER" id="PTHR11524:SF16">
    <property type="entry name" value="LARGE RIBOSOMAL SUBUNIT PROTEIN UL30"/>
    <property type="match status" value="1"/>
</dbReference>
<dbReference type="Pfam" id="PF00327">
    <property type="entry name" value="Ribosomal_L30"/>
    <property type="match status" value="1"/>
</dbReference>
<dbReference type="SUPFAM" id="SSF55129">
    <property type="entry name" value="Ribosomal protein L30p/L7e"/>
    <property type="match status" value="1"/>
</dbReference>